<proteinExistence type="inferred from homology"/>
<comment type="function">
    <text evidence="1">The heterodimer glycoprotein H-glycoprotein L is required for the fusion of viral and plasma membranes leading to virus entry into the host cell. Acts as a functional inhibitor of gH and maintains gH in an inhibited form. Upon binding to host integrins, gL dissociates from gH leading to activation of the viral fusion glycoproteins gB and gH.</text>
</comment>
<comment type="subunit">
    <text evidence="1">Interacts with glycoprotein H (gH); this interaction is necessary for the correct processing and cell surface expression of gH. The heterodimer gH/gL seems to interact with gB trimers during fusion.</text>
</comment>
<comment type="subcellular location">
    <subcellularLocation>
        <location evidence="1">Virion membrane</location>
        <topology evidence="1">Peripheral membrane protein</topology>
        <orientation evidence="1">Extracellular side</orientation>
    </subcellularLocation>
    <subcellularLocation>
        <location evidence="1">Host cell membrane</location>
        <topology evidence="1">Peripheral membrane protein</topology>
        <orientation evidence="1">Extracellular side</orientation>
    </subcellularLocation>
    <subcellularLocation>
        <location evidence="1">Host Golgi apparatus</location>
        <location evidence="1">Host trans-Golgi network</location>
    </subcellularLocation>
    <text evidence="1">gL associates with the extravirion surface through its binding to gH. During virion morphogenesis, this protein probably accumulates in the host trans-Golgi where secondary envelopment occurs.</text>
</comment>
<comment type="similarity">
    <text evidence="1">Belongs to the herpesviridae glycoprotein L family.</text>
</comment>
<sequence>MMWKWVTLLLFVLVCGDNPVNAAAHNPFVCCHQKNETAHTPPKKAWSLVNAILHSPSQCNHTNVALAYFNTTKGYKQVSCVNGFGLMSFCLALFDRLLTINVRVADQKFYDELLGYKRGFAAQFSKATTDSSGFKNNLELDLITTRHGRMASKTHVAGLTRSSASSQL</sequence>
<organismHost>
    <name type="scientific">Connochaetes taurinus</name>
    <name type="common">Blue wildebeest</name>
    <dbReference type="NCBI Taxonomy" id="9927"/>
</organismHost>
<reference key="1">
    <citation type="journal article" date="1997" name="J. Virol.">
        <title>Primary structure of the alcelaphine herpesvirus 1 genome.</title>
        <authorList>
            <person name="Ensser A."/>
            <person name="Pflanz R."/>
            <person name="Fleckenstein B."/>
        </authorList>
    </citation>
    <scope>NUCLEOTIDE SEQUENCE [LARGE SCALE GENOMIC DNA]</scope>
</reference>
<dbReference type="EMBL" id="AF005370">
    <property type="protein sequence ID" value="AAC58093.1"/>
    <property type="molecule type" value="Genomic_DNA"/>
</dbReference>
<dbReference type="PIR" id="T03141">
    <property type="entry name" value="T03141"/>
</dbReference>
<dbReference type="RefSeq" id="NP_065545.1">
    <property type="nucleotide sequence ID" value="NC_002531.1"/>
</dbReference>
<dbReference type="SMR" id="O36396"/>
<dbReference type="KEGG" id="vg:911737"/>
<dbReference type="Proteomes" id="UP000000941">
    <property type="component" value="Segment"/>
</dbReference>
<dbReference type="GO" id="GO:0044177">
    <property type="term" value="C:host cell Golgi apparatus"/>
    <property type="evidence" value="ECO:0007669"/>
    <property type="project" value="UniProtKB-SubCell"/>
</dbReference>
<dbReference type="GO" id="GO:0020002">
    <property type="term" value="C:host cell plasma membrane"/>
    <property type="evidence" value="ECO:0007669"/>
    <property type="project" value="UniProtKB-SubCell"/>
</dbReference>
<dbReference type="GO" id="GO:0016020">
    <property type="term" value="C:membrane"/>
    <property type="evidence" value="ECO:0007669"/>
    <property type="project" value="UniProtKB-KW"/>
</dbReference>
<dbReference type="GO" id="GO:0019031">
    <property type="term" value="C:viral envelope"/>
    <property type="evidence" value="ECO:0007669"/>
    <property type="project" value="UniProtKB-KW"/>
</dbReference>
<dbReference type="GO" id="GO:0055036">
    <property type="term" value="C:virion membrane"/>
    <property type="evidence" value="ECO:0007669"/>
    <property type="project" value="UniProtKB-SubCell"/>
</dbReference>
<dbReference type="GO" id="GO:0019064">
    <property type="term" value="P:fusion of virus membrane with host plasma membrane"/>
    <property type="evidence" value="ECO:0007669"/>
    <property type="project" value="UniProtKB-KW"/>
</dbReference>
<dbReference type="GO" id="GO:0046718">
    <property type="term" value="P:symbiont entry into host cell"/>
    <property type="evidence" value="ECO:0007669"/>
    <property type="project" value="UniProtKB-KW"/>
</dbReference>
<dbReference type="Gene3D" id="3.10.390.20">
    <property type="entry name" value="Viral glycoprotein L"/>
    <property type="match status" value="1"/>
</dbReference>
<dbReference type="HAMAP" id="MF_04034">
    <property type="entry name" value="HSV_GL_alphagamma"/>
    <property type="match status" value="1"/>
</dbReference>
<dbReference type="InterPro" id="IPR020175">
    <property type="entry name" value="Herpes_gL_rhadinovirus"/>
</dbReference>
<dbReference type="InterPro" id="IPR038313">
    <property type="entry name" value="Herpes_gL_rhadinovirus_sf"/>
</dbReference>
<dbReference type="InterPro" id="IPR034708">
    <property type="entry name" value="HSV_GL_alphagamma"/>
</dbReference>
<dbReference type="Pfam" id="PF11108">
    <property type="entry name" value="Phage_glycop_gL"/>
    <property type="match status" value="1"/>
</dbReference>
<accession>O36396</accession>
<protein>
    <recommendedName>
        <fullName evidence="1">Envelope glycoprotein L</fullName>
        <shortName evidence="1">gL</shortName>
    </recommendedName>
</protein>
<keyword id="KW-1169">Fusion of virus membrane with host cell membrane</keyword>
<keyword id="KW-1168">Fusion of virus membrane with host membrane</keyword>
<keyword id="KW-0325">Glycoprotein</keyword>
<keyword id="KW-1032">Host cell membrane</keyword>
<keyword id="KW-1040">Host Golgi apparatus</keyword>
<keyword id="KW-1043">Host membrane</keyword>
<keyword id="KW-0472">Membrane</keyword>
<keyword id="KW-1185">Reference proteome</keyword>
<keyword id="KW-0732">Signal</keyword>
<keyword id="KW-0261">Viral envelope protein</keyword>
<keyword id="KW-1162">Viral penetration into host cytoplasm</keyword>
<keyword id="KW-0946">Virion</keyword>
<keyword id="KW-1160">Virus entry into host cell</keyword>
<feature type="signal peptide" evidence="1">
    <location>
        <begin position="1"/>
        <end position="22"/>
    </location>
</feature>
<feature type="chain" id="PRO_0000405756" description="Envelope glycoprotein L" evidence="1">
    <location>
        <begin position="23"/>
        <end position="168"/>
    </location>
</feature>
<feature type="region of interest" description="Interaction with gH" evidence="1">
    <location>
        <begin position="25"/>
        <end position="138"/>
    </location>
</feature>
<organism>
    <name type="scientific">Alcelaphine herpesvirus 1 (strain C500)</name>
    <name type="common">AlHV-1</name>
    <name type="synonym">Malignant catarrhal fever virus</name>
    <dbReference type="NCBI Taxonomy" id="654901"/>
    <lineage>
        <taxon>Viruses</taxon>
        <taxon>Duplodnaviria</taxon>
        <taxon>Heunggongvirae</taxon>
        <taxon>Peploviricota</taxon>
        <taxon>Herviviricetes</taxon>
        <taxon>Herpesvirales</taxon>
        <taxon>Orthoherpesviridae</taxon>
        <taxon>Gammaherpesvirinae</taxon>
        <taxon>Macavirus</taxon>
        <taxon>Macavirus alcelaphinegamma1</taxon>
    </lineage>
</organism>
<name>GL_ALHV1</name>
<evidence type="ECO:0000255" key="1">
    <source>
        <dbReference type="HAMAP-Rule" id="MF_04034"/>
    </source>
</evidence>
<gene>
    <name evidence="1" type="primary">gL</name>
    <name type="ORF">47</name>
</gene>